<keyword id="KW-0021">Allosteric enzyme</keyword>
<keyword id="KW-0119">Carbohydrate metabolism</keyword>
<keyword id="KW-0378">Hydrolase</keyword>
<evidence type="ECO:0000255" key="1">
    <source>
        <dbReference type="HAMAP-Rule" id="MF_01241"/>
    </source>
</evidence>
<reference key="1">
    <citation type="journal article" date="2008" name="BMC Genomics">
        <title>The genome sequence of the fish pathogen Aliivibrio salmonicida strain LFI1238 shows extensive evidence of gene decay.</title>
        <authorList>
            <person name="Hjerde E."/>
            <person name="Lorentzen M.S."/>
            <person name="Holden M.T."/>
            <person name="Seeger K."/>
            <person name="Paulsen S."/>
            <person name="Bason N."/>
            <person name="Churcher C."/>
            <person name="Harris D."/>
            <person name="Norbertczak H."/>
            <person name="Quail M.A."/>
            <person name="Sanders S."/>
            <person name="Thurston S."/>
            <person name="Parkhill J."/>
            <person name="Willassen N.P."/>
            <person name="Thomson N.R."/>
        </authorList>
    </citation>
    <scope>NUCLEOTIDE SEQUENCE [LARGE SCALE GENOMIC DNA]</scope>
    <source>
        <strain>LFI1238</strain>
    </source>
</reference>
<sequence length="266" mass="29974">MRLIPLNQAEQVGAWSAQHIVNRINEFNPTADRPFVLGLPTGGTPLNTYKKLIELYKADKVSFKNVVTFNMDEYIGLDTNHPESYRTFMFENFFNHVDIQEENINLLNGNTDNHEEECQRYEDKIKSYGRINLFMGGVGNDGHIAFNEPASSLASRTRIKTLTEDTRIANSRFFDGDIAQVPKYALTIGVGTLLDSAEIMILITGHNKALALQAAVEGSVNHMWTVSALQIHPKSVIVCDEASQQELKVKTVKYFKELEAENIKHV</sequence>
<name>NAGB_ALISL</name>
<proteinExistence type="inferred from homology"/>
<gene>
    <name evidence="1" type="primary">nagB</name>
    <name type="ordered locus">VSAL_I2812</name>
</gene>
<feature type="chain" id="PRO_1000139753" description="Glucosamine-6-phosphate deaminase">
    <location>
        <begin position="1"/>
        <end position="266"/>
    </location>
</feature>
<feature type="active site" description="Proton acceptor; for enolization step" evidence="1">
    <location>
        <position position="72"/>
    </location>
</feature>
<feature type="active site" description="For ring-opening step" evidence="1">
    <location>
        <position position="141"/>
    </location>
</feature>
<feature type="active site" description="Proton acceptor; for ring-opening step" evidence="1">
    <location>
        <position position="143"/>
    </location>
</feature>
<feature type="active site" description="For ring-opening step" evidence="1">
    <location>
        <position position="148"/>
    </location>
</feature>
<feature type="site" description="Part of the allosteric site" evidence="1">
    <location>
        <position position="151"/>
    </location>
</feature>
<feature type="site" description="Part of the allosteric site" evidence="1">
    <location>
        <position position="158"/>
    </location>
</feature>
<feature type="site" description="Part of the allosteric site" evidence="1">
    <location>
        <position position="160"/>
    </location>
</feature>
<feature type="site" description="Part of the allosteric site" evidence="1">
    <location>
        <position position="161"/>
    </location>
</feature>
<feature type="site" description="Part of the allosteric site" evidence="1">
    <location>
        <position position="254"/>
    </location>
</feature>
<comment type="function">
    <text evidence="1">Catalyzes the reversible isomerization-deamination of glucosamine 6-phosphate (GlcN6P) to form fructose 6-phosphate (Fru6P) and ammonium ion.</text>
</comment>
<comment type="catalytic activity">
    <reaction evidence="1">
        <text>alpha-D-glucosamine 6-phosphate + H2O = beta-D-fructose 6-phosphate + NH4(+)</text>
        <dbReference type="Rhea" id="RHEA:12172"/>
        <dbReference type="ChEBI" id="CHEBI:15377"/>
        <dbReference type="ChEBI" id="CHEBI:28938"/>
        <dbReference type="ChEBI" id="CHEBI:57634"/>
        <dbReference type="ChEBI" id="CHEBI:75989"/>
        <dbReference type="EC" id="3.5.99.6"/>
    </reaction>
</comment>
<comment type="activity regulation">
    <text evidence="1">Allosterically activated by N-acetylglucosamine 6-phosphate (GlcNAc6P).</text>
</comment>
<comment type="pathway">
    <text evidence="1">Amino-sugar metabolism; N-acetylneuraminate degradation; D-fructose 6-phosphate from N-acetylneuraminate: step 5/5.</text>
</comment>
<comment type="subunit">
    <text evidence="1">Homohexamer.</text>
</comment>
<comment type="similarity">
    <text evidence="1">Belongs to the glucosamine/galactosamine-6-phosphate isomerase family. NagB subfamily.</text>
</comment>
<accession>B6EN78</accession>
<organism>
    <name type="scientific">Aliivibrio salmonicida (strain LFI1238)</name>
    <name type="common">Vibrio salmonicida (strain LFI1238)</name>
    <dbReference type="NCBI Taxonomy" id="316275"/>
    <lineage>
        <taxon>Bacteria</taxon>
        <taxon>Pseudomonadati</taxon>
        <taxon>Pseudomonadota</taxon>
        <taxon>Gammaproteobacteria</taxon>
        <taxon>Vibrionales</taxon>
        <taxon>Vibrionaceae</taxon>
        <taxon>Aliivibrio</taxon>
    </lineage>
</organism>
<protein>
    <recommendedName>
        <fullName evidence="1">Glucosamine-6-phosphate deaminase</fullName>
        <ecNumber evidence="1">3.5.99.6</ecNumber>
    </recommendedName>
    <alternativeName>
        <fullName evidence="1">GlcN6P deaminase</fullName>
        <shortName evidence="1">GNPDA</shortName>
    </alternativeName>
    <alternativeName>
        <fullName evidence="1">Glucosamine-6-phosphate isomerase</fullName>
    </alternativeName>
</protein>
<dbReference type="EC" id="3.5.99.6" evidence="1"/>
<dbReference type="EMBL" id="FM178379">
    <property type="protein sequence ID" value="CAQ80496.1"/>
    <property type="molecule type" value="Genomic_DNA"/>
</dbReference>
<dbReference type="RefSeq" id="WP_012551244.1">
    <property type="nucleotide sequence ID" value="NC_011312.1"/>
</dbReference>
<dbReference type="SMR" id="B6EN78"/>
<dbReference type="KEGG" id="vsa:VSAL_I2812"/>
<dbReference type="eggNOG" id="COG0363">
    <property type="taxonomic scope" value="Bacteria"/>
</dbReference>
<dbReference type="HOGENOM" id="CLU_049611_0_1_6"/>
<dbReference type="UniPathway" id="UPA00629">
    <property type="reaction ID" value="UER00684"/>
</dbReference>
<dbReference type="Proteomes" id="UP000001730">
    <property type="component" value="Chromosome 1"/>
</dbReference>
<dbReference type="GO" id="GO:0005737">
    <property type="term" value="C:cytoplasm"/>
    <property type="evidence" value="ECO:0007669"/>
    <property type="project" value="TreeGrafter"/>
</dbReference>
<dbReference type="GO" id="GO:0004342">
    <property type="term" value="F:glucosamine-6-phosphate deaminase activity"/>
    <property type="evidence" value="ECO:0007669"/>
    <property type="project" value="UniProtKB-UniRule"/>
</dbReference>
<dbReference type="GO" id="GO:0042802">
    <property type="term" value="F:identical protein binding"/>
    <property type="evidence" value="ECO:0007669"/>
    <property type="project" value="TreeGrafter"/>
</dbReference>
<dbReference type="GO" id="GO:0005975">
    <property type="term" value="P:carbohydrate metabolic process"/>
    <property type="evidence" value="ECO:0007669"/>
    <property type="project" value="InterPro"/>
</dbReference>
<dbReference type="GO" id="GO:0006043">
    <property type="term" value="P:glucosamine catabolic process"/>
    <property type="evidence" value="ECO:0007669"/>
    <property type="project" value="TreeGrafter"/>
</dbReference>
<dbReference type="GO" id="GO:0006046">
    <property type="term" value="P:N-acetylglucosamine catabolic process"/>
    <property type="evidence" value="ECO:0007669"/>
    <property type="project" value="TreeGrafter"/>
</dbReference>
<dbReference type="GO" id="GO:0019262">
    <property type="term" value="P:N-acetylneuraminate catabolic process"/>
    <property type="evidence" value="ECO:0007669"/>
    <property type="project" value="UniProtKB-UniRule"/>
</dbReference>
<dbReference type="CDD" id="cd01399">
    <property type="entry name" value="GlcN6P_deaminase"/>
    <property type="match status" value="1"/>
</dbReference>
<dbReference type="FunFam" id="3.40.50.1360:FF:000002">
    <property type="entry name" value="Glucosamine-6-phosphate deaminase"/>
    <property type="match status" value="1"/>
</dbReference>
<dbReference type="Gene3D" id="3.40.50.1360">
    <property type="match status" value="1"/>
</dbReference>
<dbReference type="HAMAP" id="MF_01241">
    <property type="entry name" value="GlcN6P_deamin"/>
    <property type="match status" value="1"/>
</dbReference>
<dbReference type="InterPro" id="IPR006148">
    <property type="entry name" value="Glc/Gal-6P_isomerase"/>
</dbReference>
<dbReference type="InterPro" id="IPR004547">
    <property type="entry name" value="Glucosamine6P_isomerase"/>
</dbReference>
<dbReference type="InterPro" id="IPR018321">
    <property type="entry name" value="Glucosamine6P_isomerase_CS"/>
</dbReference>
<dbReference type="InterPro" id="IPR037171">
    <property type="entry name" value="NagB/RpiA_transferase-like"/>
</dbReference>
<dbReference type="NCBIfam" id="TIGR00502">
    <property type="entry name" value="nagB"/>
    <property type="match status" value="1"/>
</dbReference>
<dbReference type="PANTHER" id="PTHR11280">
    <property type="entry name" value="GLUCOSAMINE-6-PHOSPHATE ISOMERASE"/>
    <property type="match status" value="1"/>
</dbReference>
<dbReference type="PANTHER" id="PTHR11280:SF5">
    <property type="entry name" value="GLUCOSAMINE-6-PHOSPHATE ISOMERASE"/>
    <property type="match status" value="1"/>
</dbReference>
<dbReference type="Pfam" id="PF01182">
    <property type="entry name" value="Glucosamine_iso"/>
    <property type="match status" value="1"/>
</dbReference>
<dbReference type="SUPFAM" id="SSF100950">
    <property type="entry name" value="NagB/RpiA/CoA transferase-like"/>
    <property type="match status" value="1"/>
</dbReference>
<dbReference type="PROSITE" id="PS01161">
    <property type="entry name" value="GLC_GALNAC_ISOMERASE"/>
    <property type="match status" value="1"/>
</dbReference>